<name>SYP_PECCP</name>
<keyword id="KW-0030">Aminoacyl-tRNA synthetase</keyword>
<keyword id="KW-0067">ATP-binding</keyword>
<keyword id="KW-0963">Cytoplasm</keyword>
<keyword id="KW-0436">Ligase</keyword>
<keyword id="KW-0547">Nucleotide-binding</keyword>
<keyword id="KW-0648">Protein biosynthesis</keyword>
<proteinExistence type="inferred from homology"/>
<sequence length="572" mass="63800">MRTSQYMLSTLKETPADAEVISHQLMLRAGMIRKLASGLYTWLPTGLRVLRKVENIVREEMNNAGAIEVSMPVVQPADLWVESGRWDQYGPELLRFVDRGERPFVLGPTHEEVITDLIRNEISSYKQLPLNFFQIQTKFRDEVRPRFGVMRSREFLMKDAYSFHTSQESLQVTYDAMYAAYSQIFSRMDLDFRAVQADTGSIGGNASHEFQVLAASGEDDIVFSTDSDYAANIELAEAVAPKLGRAEAKEELHLVDTPNAKTIAELVEQFKLPVEKTVKTLLVKATEESGHKLVALLVRGDHELNEIKAEKIAQVASPLTFATEEEIRATIGAGPGSLGPVKLSIPVVVDRTVAAMSDFSAGANIDGKHYFGINWERDVALPQVADIRNVVEGDISPDGKGTLQIKRGIEVGHIFQLGSKYSEALKATVQGEDGRNQTLTMGCYGIGVTRVVAAAIEQNHDERGIIWPDAIAPFHVAILPMNMHKSFRVKEVAEDIYQQLRAKGIEVLLDDRKERPGVMFADMELIGVPHTIVIGDRNLDSEEIEYKHRRIGEKQMIKTNEIVDFLLANIVR</sequence>
<feature type="chain" id="PRO_1000215535" description="Proline--tRNA ligase">
    <location>
        <begin position="1"/>
        <end position="572"/>
    </location>
</feature>
<reference key="1">
    <citation type="submission" date="2009-07" db="EMBL/GenBank/DDBJ databases">
        <title>Complete sequence of Pectobacterium carotovorum subsp. carotovorum PC1.</title>
        <authorList>
            <consortium name="US DOE Joint Genome Institute"/>
            <person name="Lucas S."/>
            <person name="Copeland A."/>
            <person name="Lapidus A."/>
            <person name="Glavina del Rio T."/>
            <person name="Tice H."/>
            <person name="Bruce D."/>
            <person name="Goodwin L."/>
            <person name="Pitluck S."/>
            <person name="Munk A.C."/>
            <person name="Brettin T."/>
            <person name="Detter J.C."/>
            <person name="Han C."/>
            <person name="Tapia R."/>
            <person name="Larimer F."/>
            <person name="Land M."/>
            <person name="Hauser L."/>
            <person name="Kyrpides N."/>
            <person name="Mikhailova N."/>
            <person name="Balakrishnan V."/>
            <person name="Glasner J."/>
            <person name="Perna N.T."/>
        </authorList>
    </citation>
    <scope>NUCLEOTIDE SEQUENCE [LARGE SCALE GENOMIC DNA]</scope>
    <source>
        <strain>PC1</strain>
    </source>
</reference>
<evidence type="ECO:0000255" key="1">
    <source>
        <dbReference type="HAMAP-Rule" id="MF_01569"/>
    </source>
</evidence>
<comment type="function">
    <text evidence="1">Catalyzes the attachment of proline to tRNA(Pro) in a two-step reaction: proline is first activated by ATP to form Pro-AMP and then transferred to the acceptor end of tRNA(Pro). As ProRS can inadvertently accommodate and process non-cognate amino acids such as alanine and cysteine, to avoid such errors it has two additional distinct editing activities against alanine. One activity is designated as 'pretransfer' editing and involves the tRNA(Pro)-independent hydrolysis of activated Ala-AMP. The other activity is designated 'posttransfer' editing and involves deacylation of mischarged Ala-tRNA(Pro). The misacylated Cys-tRNA(Pro) is not edited by ProRS.</text>
</comment>
<comment type="catalytic activity">
    <reaction evidence="1">
        <text>tRNA(Pro) + L-proline + ATP = L-prolyl-tRNA(Pro) + AMP + diphosphate</text>
        <dbReference type="Rhea" id="RHEA:14305"/>
        <dbReference type="Rhea" id="RHEA-COMP:9700"/>
        <dbReference type="Rhea" id="RHEA-COMP:9702"/>
        <dbReference type="ChEBI" id="CHEBI:30616"/>
        <dbReference type="ChEBI" id="CHEBI:33019"/>
        <dbReference type="ChEBI" id="CHEBI:60039"/>
        <dbReference type="ChEBI" id="CHEBI:78442"/>
        <dbReference type="ChEBI" id="CHEBI:78532"/>
        <dbReference type="ChEBI" id="CHEBI:456215"/>
        <dbReference type="EC" id="6.1.1.15"/>
    </reaction>
</comment>
<comment type="subunit">
    <text evidence="1">Homodimer.</text>
</comment>
<comment type="subcellular location">
    <subcellularLocation>
        <location evidence="1">Cytoplasm</location>
    </subcellularLocation>
</comment>
<comment type="domain">
    <text evidence="1">Consists of three domains: the N-terminal catalytic domain, the editing domain and the C-terminal anticodon-binding domain.</text>
</comment>
<comment type="similarity">
    <text evidence="1">Belongs to the class-II aminoacyl-tRNA synthetase family. ProS type 1 subfamily.</text>
</comment>
<dbReference type="EC" id="6.1.1.15" evidence="1"/>
<dbReference type="EMBL" id="CP001657">
    <property type="protein sequence ID" value="ACT14363.1"/>
    <property type="molecule type" value="Genomic_DNA"/>
</dbReference>
<dbReference type="RefSeq" id="WP_015841493.1">
    <property type="nucleotide sequence ID" value="NC_012917.1"/>
</dbReference>
<dbReference type="SMR" id="C6DDF6"/>
<dbReference type="STRING" id="561230.PC1_3347"/>
<dbReference type="KEGG" id="pct:PC1_3347"/>
<dbReference type="eggNOG" id="COG0442">
    <property type="taxonomic scope" value="Bacteria"/>
</dbReference>
<dbReference type="HOGENOM" id="CLU_016739_0_0_6"/>
<dbReference type="OrthoDB" id="9809052at2"/>
<dbReference type="Proteomes" id="UP000002736">
    <property type="component" value="Chromosome"/>
</dbReference>
<dbReference type="GO" id="GO:0005829">
    <property type="term" value="C:cytosol"/>
    <property type="evidence" value="ECO:0007669"/>
    <property type="project" value="TreeGrafter"/>
</dbReference>
<dbReference type="GO" id="GO:0002161">
    <property type="term" value="F:aminoacyl-tRNA deacylase activity"/>
    <property type="evidence" value="ECO:0007669"/>
    <property type="project" value="InterPro"/>
</dbReference>
<dbReference type="GO" id="GO:0005524">
    <property type="term" value="F:ATP binding"/>
    <property type="evidence" value="ECO:0007669"/>
    <property type="project" value="UniProtKB-UniRule"/>
</dbReference>
<dbReference type="GO" id="GO:0004827">
    <property type="term" value="F:proline-tRNA ligase activity"/>
    <property type="evidence" value="ECO:0007669"/>
    <property type="project" value="UniProtKB-UniRule"/>
</dbReference>
<dbReference type="GO" id="GO:0006433">
    <property type="term" value="P:prolyl-tRNA aminoacylation"/>
    <property type="evidence" value="ECO:0007669"/>
    <property type="project" value="UniProtKB-UniRule"/>
</dbReference>
<dbReference type="CDD" id="cd04334">
    <property type="entry name" value="ProRS-INS"/>
    <property type="match status" value="1"/>
</dbReference>
<dbReference type="CDD" id="cd00861">
    <property type="entry name" value="ProRS_anticodon_short"/>
    <property type="match status" value="1"/>
</dbReference>
<dbReference type="CDD" id="cd00779">
    <property type="entry name" value="ProRS_core_prok"/>
    <property type="match status" value="1"/>
</dbReference>
<dbReference type="FunFam" id="3.30.930.10:FF:000012">
    <property type="entry name" value="Proline--tRNA ligase"/>
    <property type="match status" value="1"/>
</dbReference>
<dbReference type="FunFam" id="3.30.930.10:FF:000097">
    <property type="entry name" value="Proline--tRNA ligase"/>
    <property type="match status" value="1"/>
</dbReference>
<dbReference type="FunFam" id="3.40.50.800:FF:000006">
    <property type="entry name" value="Proline--tRNA ligase"/>
    <property type="match status" value="1"/>
</dbReference>
<dbReference type="FunFam" id="3.90.960.10:FF:000001">
    <property type="entry name" value="Proline--tRNA ligase"/>
    <property type="match status" value="1"/>
</dbReference>
<dbReference type="Gene3D" id="3.40.50.800">
    <property type="entry name" value="Anticodon-binding domain"/>
    <property type="match status" value="1"/>
</dbReference>
<dbReference type="Gene3D" id="3.30.930.10">
    <property type="entry name" value="Bira Bifunctional Protein, Domain 2"/>
    <property type="match status" value="2"/>
</dbReference>
<dbReference type="Gene3D" id="3.90.960.10">
    <property type="entry name" value="YbaK/aminoacyl-tRNA synthetase-associated domain"/>
    <property type="match status" value="1"/>
</dbReference>
<dbReference type="HAMAP" id="MF_01569">
    <property type="entry name" value="Pro_tRNA_synth_type1"/>
    <property type="match status" value="1"/>
</dbReference>
<dbReference type="InterPro" id="IPR002314">
    <property type="entry name" value="aa-tRNA-synt_IIb"/>
</dbReference>
<dbReference type="InterPro" id="IPR006195">
    <property type="entry name" value="aa-tRNA-synth_II"/>
</dbReference>
<dbReference type="InterPro" id="IPR045864">
    <property type="entry name" value="aa-tRNA-synth_II/BPL/LPL"/>
</dbReference>
<dbReference type="InterPro" id="IPR004154">
    <property type="entry name" value="Anticodon-bd"/>
</dbReference>
<dbReference type="InterPro" id="IPR036621">
    <property type="entry name" value="Anticodon-bd_dom_sf"/>
</dbReference>
<dbReference type="InterPro" id="IPR002316">
    <property type="entry name" value="Pro-tRNA-ligase_IIa"/>
</dbReference>
<dbReference type="InterPro" id="IPR004500">
    <property type="entry name" value="Pro-tRNA-synth_IIa_bac-type"/>
</dbReference>
<dbReference type="InterPro" id="IPR023717">
    <property type="entry name" value="Pro-tRNA-Synthase_IIa_type1"/>
</dbReference>
<dbReference type="InterPro" id="IPR050062">
    <property type="entry name" value="Pro-tRNA_synthetase"/>
</dbReference>
<dbReference type="InterPro" id="IPR044140">
    <property type="entry name" value="ProRS_anticodon_short"/>
</dbReference>
<dbReference type="InterPro" id="IPR033730">
    <property type="entry name" value="ProRS_core_prok"/>
</dbReference>
<dbReference type="InterPro" id="IPR036754">
    <property type="entry name" value="YbaK/aa-tRNA-synt-asso_dom_sf"/>
</dbReference>
<dbReference type="InterPro" id="IPR007214">
    <property type="entry name" value="YbaK/aa-tRNA-synth-assoc-dom"/>
</dbReference>
<dbReference type="NCBIfam" id="NF006625">
    <property type="entry name" value="PRK09194.1"/>
    <property type="match status" value="1"/>
</dbReference>
<dbReference type="NCBIfam" id="TIGR00409">
    <property type="entry name" value="proS_fam_II"/>
    <property type="match status" value="1"/>
</dbReference>
<dbReference type="PANTHER" id="PTHR42753">
    <property type="entry name" value="MITOCHONDRIAL RIBOSOME PROTEIN L39/PROLYL-TRNA LIGASE FAMILY MEMBER"/>
    <property type="match status" value="1"/>
</dbReference>
<dbReference type="PANTHER" id="PTHR42753:SF2">
    <property type="entry name" value="PROLINE--TRNA LIGASE"/>
    <property type="match status" value="1"/>
</dbReference>
<dbReference type="Pfam" id="PF03129">
    <property type="entry name" value="HGTP_anticodon"/>
    <property type="match status" value="1"/>
</dbReference>
<dbReference type="Pfam" id="PF00587">
    <property type="entry name" value="tRNA-synt_2b"/>
    <property type="match status" value="1"/>
</dbReference>
<dbReference type="Pfam" id="PF04073">
    <property type="entry name" value="tRNA_edit"/>
    <property type="match status" value="1"/>
</dbReference>
<dbReference type="PIRSF" id="PIRSF001535">
    <property type="entry name" value="ProRS_1"/>
    <property type="match status" value="1"/>
</dbReference>
<dbReference type="PRINTS" id="PR01046">
    <property type="entry name" value="TRNASYNTHPRO"/>
</dbReference>
<dbReference type="SUPFAM" id="SSF52954">
    <property type="entry name" value="Class II aaRS ABD-related"/>
    <property type="match status" value="1"/>
</dbReference>
<dbReference type="SUPFAM" id="SSF55681">
    <property type="entry name" value="Class II aaRS and biotin synthetases"/>
    <property type="match status" value="1"/>
</dbReference>
<dbReference type="SUPFAM" id="SSF55826">
    <property type="entry name" value="YbaK/ProRS associated domain"/>
    <property type="match status" value="1"/>
</dbReference>
<dbReference type="PROSITE" id="PS50862">
    <property type="entry name" value="AA_TRNA_LIGASE_II"/>
    <property type="match status" value="1"/>
</dbReference>
<accession>C6DDF6</accession>
<gene>
    <name evidence="1" type="primary">proS</name>
    <name type="ordered locus">PC1_3347</name>
</gene>
<protein>
    <recommendedName>
        <fullName evidence="1">Proline--tRNA ligase</fullName>
        <ecNumber evidence="1">6.1.1.15</ecNumber>
    </recommendedName>
    <alternativeName>
        <fullName evidence="1">Prolyl-tRNA synthetase</fullName>
        <shortName evidence="1">ProRS</shortName>
    </alternativeName>
</protein>
<organism>
    <name type="scientific">Pectobacterium carotovorum subsp. carotovorum (strain PC1)</name>
    <dbReference type="NCBI Taxonomy" id="561230"/>
    <lineage>
        <taxon>Bacteria</taxon>
        <taxon>Pseudomonadati</taxon>
        <taxon>Pseudomonadota</taxon>
        <taxon>Gammaproteobacteria</taxon>
        <taxon>Enterobacterales</taxon>
        <taxon>Pectobacteriaceae</taxon>
        <taxon>Pectobacterium</taxon>
    </lineage>
</organism>